<reference key="1">
    <citation type="submission" date="2006-12" db="EMBL/GenBank/DDBJ databases">
        <title>Complete sequence of Shewanella amazonensis SB2B.</title>
        <authorList>
            <consortium name="US DOE Joint Genome Institute"/>
            <person name="Copeland A."/>
            <person name="Lucas S."/>
            <person name="Lapidus A."/>
            <person name="Barry K."/>
            <person name="Detter J.C."/>
            <person name="Glavina del Rio T."/>
            <person name="Hammon N."/>
            <person name="Israni S."/>
            <person name="Dalin E."/>
            <person name="Tice H."/>
            <person name="Pitluck S."/>
            <person name="Munk A.C."/>
            <person name="Brettin T."/>
            <person name="Bruce D."/>
            <person name="Han C."/>
            <person name="Tapia R."/>
            <person name="Gilna P."/>
            <person name="Schmutz J."/>
            <person name="Larimer F."/>
            <person name="Land M."/>
            <person name="Hauser L."/>
            <person name="Kyrpides N."/>
            <person name="Mikhailova N."/>
            <person name="Fredrickson J."/>
            <person name="Richardson P."/>
        </authorList>
    </citation>
    <scope>NUCLEOTIDE SEQUENCE [LARGE SCALE GENOMIC DNA]</scope>
    <source>
        <strain>ATCC BAA-1098 / SB2B</strain>
    </source>
</reference>
<gene>
    <name evidence="1" type="primary">csrA</name>
    <name type="ordered locus">Sama_1050</name>
</gene>
<feature type="chain" id="PRO_1000023415" description="Translational regulator CsrA">
    <location>
        <begin position="1"/>
        <end position="64"/>
    </location>
</feature>
<proteinExistence type="inferred from homology"/>
<name>CSRA_SHEAM</name>
<accession>A1S4F1</accession>
<organism>
    <name type="scientific">Shewanella amazonensis (strain ATCC BAA-1098 / SB2B)</name>
    <dbReference type="NCBI Taxonomy" id="326297"/>
    <lineage>
        <taxon>Bacteria</taxon>
        <taxon>Pseudomonadati</taxon>
        <taxon>Pseudomonadota</taxon>
        <taxon>Gammaproteobacteria</taxon>
        <taxon>Alteromonadales</taxon>
        <taxon>Shewanellaceae</taxon>
        <taxon>Shewanella</taxon>
    </lineage>
</organism>
<sequence>MLILTRRVGETLMIGDEVTVTVLGVKGNQVRIGVNAPKEVSVHREEIYQRIQSEKTGSPEGGNY</sequence>
<keyword id="KW-0010">Activator</keyword>
<keyword id="KW-0963">Cytoplasm</keyword>
<keyword id="KW-1185">Reference proteome</keyword>
<keyword id="KW-0678">Repressor</keyword>
<keyword id="KW-0694">RNA-binding</keyword>
<keyword id="KW-0810">Translation regulation</keyword>
<evidence type="ECO:0000255" key="1">
    <source>
        <dbReference type="HAMAP-Rule" id="MF_00167"/>
    </source>
</evidence>
<dbReference type="EMBL" id="CP000507">
    <property type="protein sequence ID" value="ABL99257.1"/>
    <property type="molecule type" value="Genomic_DNA"/>
</dbReference>
<dbReference type="RefSeq" id="WP_011759166.1">
    <property type="nucleotide sequence ID" value="NC_008700.1"/>
</dbReference>
<dbReference type="SMR" id="A1S4F1"/>
<dbReference type="STRING" id="326297.Sama_1050"/>
<dbReference type="KEGG" id="saz:Sama_1050"/>
<dbReference type="eggNOG" id="COG1551">
    <property type="taxonomic scope" value="Bacteria"/>
</dbReference>
<dbReference type="HOGENOM" id="CLU_164837_2_1_6"/>
<dbReference type="OrthoDB" id="9809061at2"/>
<dbReference type="Proteomes" id="UP000009175">
    <property type="component" value="Chromosome"/>
</dbReference>
<dbReference type="GO" id="GO:0005829">
    <property type="term" value="C:cytosol"/>
    <property type="evidence" value="ECO:0007669"/>
    <property type="project" value="TreeGrafter"/>
</dbReference>
<dbReference type="GO" id="GO:0048027">
    <property type="term" value="F:mRNA 5'-UTR binding"/>
    <property type="evidence" value="ECO:0007669"/>
    <property type="project" value="UniProtKB-UniRule"/>
</dbReference>
<dbReference type="GO" id="GO:0006402">
    <property type="term" value="P:mRNA catabolic process"/>
    <property type="evidence" value="ECO:0007669"/>
    <property type="project" value="InterPro"/>
</dbReference>
<dbReference type="GO" id="GO:0045947">
    <property type="term" value="P:negative regulation of translational initiation"/>
    <property type="evidence" value="ECO:0007669"/>
    <property type="project" value="UniProtKB-UniRule"/>
</dbReference>
<dbReference type="GO" id="GO:0045948">
    <property type="term" value="P:positive regulation of translational initiation"/>
    <property type="evidence" value="ECO:0007669"/>
    <property type="project" value="UniProtKB-UniRule"/>
</dbReference>
<dbReference type="GO" id="GO:0006109">
    <property type="term" value="P:regulation of carbohydrate metabolic process"/>
    <property type="evidence" value="ECO:0007669"/>
    <property type="project" value="UniProtKB-UniRule"/>
</dbReference>
<dbReference type="FunFam" id="2.60.40.4380:FF:000001">
    <property type="entry name" value="Translational regulator CsrA"/>
    <property type="match status" value="1"/>
</dbReference>
<dbReference type="Gene3D" id="2.60.40.4380">
    <property type="entry name" value="Translational regulator CsrA"/>
    <property type="match status" value="1"/>
</dbReference>
<dbReference type="HAMAP" id="MF_00167">
    <property type="entry name" value="CsrA"/>
    <property type="match status" value="1"/>
</dbReference>
<dbReference type="InterPro" id="IPR003751">
    <property type="entry name" value="CsrA"/>
</dbReference>
<dbReference type="InterPro" id="IPR036107">
    <property type="entry name" value="CsrA_sf"/>
</dbReference>
<dbReference type="NCBIfam" id="TIGR00202">
    <property type="entry name" value="csrA"/>
    <property type="match status" value="1"/>
</dbReference>
<dbReference type="NCBIfam" id="NF002469">
    <property type="entry name" value="PRK01712.1"/>
    <property type="match status" value="1"/>
</dbReference>
<dbReference type="PANTHER" id="PTHR34984">
    <property type="entry name" value="CARBON STORAGE REGULATOR"/>
    <property type="match status" value="1"/>
</dbReference>
<dbReference type="PANTHER" id="PTHR34984:SF1">
    <property type="entry name" value="CARBON STORAGE REGULATOR"/>
    <property type="match status" value="1"/>
</dbReference>
<dbReference type="Pfam" id="PF02599">
    <property type="entry name" value="CsrA"/>
    <property type="match status" value="1"/>
</dbReference>
<dbReference type="SUPFAM" id="SSF117130">
    <property type="entry name" value="CsrA-like"/>
    <property type="match status" value="1"/>
</dbReference>
<protein>
    <recommendedName>
        <fullName evidence="1">Translational regulator CsrA</fullName>
    </recommendedName>
    <alternativeName>
        <fullName evidence="1">Carbon storage regulator</fullName>
    </alternativeName>
</protein>
<comment type="function">
    <text evidence="1">A key translational regulator that binds mRNA to regulate translation initiation and/or mRNA stability. Mediates global changes in gene expression, shifting from rapid growth to stress survival by linking envelope stress, the stringent response and the catabolite repression systems. Usually binds in the 5'-UTR; binding at or near the Shine-Dalgarno sequence prevents ribosome-binding, repressing translation, binding elsewhere in the 5'-UTR can activate translation and/or stabilize the mRNA. Its function is antagonized by small RNA(s).</text>
</comment>
<comment type="subunit">
    <text evidence="1">Homodimer; the beta-strands of each monomer intercalate to form a hydrophobic core, while the alpha-helices form wings that extend away from the core.</text>
</comment>
<comment type="subcellular location">
    <subcellularLocation>
        <location evidence="1">Cytoplasm</location>
    </subcellularLocation>
</comment>
<comment type="similarity">
    <text evidence="1">Belongs to the CsrA/RsmA family.</text>
</comment>